<comment type="function">
    <text evidence="4">Part of the AP-3 complex, an adaptor-related complex which is essential for the compartmentalization of the endocytic pathway.</text>
</comment>
<comment type="subunit">
    <text evidence="1">Adaptor protein complex 3 (AP-3) is a heterotetramer composed of two large adaptins (delta-type subunit and beta-type subunit), a medium adaptin (mu-type subunit) and a small adaptin (sigma-type subunit).</text>
</comment>
<comment type="subcellular location">
    <subcellularLocation>
        <location evidence="1">Endosome membrane</location>
    </subcellularLocation>
</comment>
<comment type="developmental stage">
    <text evidence="3">Constant expression throughout development.</text>
</comment>
<comment type="disruption phenotype">
    <text evidence="4">Cells are viable but are unable to retrieve efficiently some proteins from early endocytic compartments.</text>
</comment>
<comment type="similarity">
    <text evidence="5">Belongs to the adaptor complexes medium subunit family.</text>
</comment>
<evidence type="ECO:0000250" key="1"/>
<evidence type="ECO:0000255" key="2">
    <source>
        <dbReference type="PROSITE-ProRule" id="PRU00404"/>
    </source>
</evidence>
<evidence type="ECO:0000269" key="3">
    <source>
    </source>
</evidence>
<evidence type="ECO:0000269" key="4">
    <source>
    </source>
</evidence>
<evidence type="ECO:0000305" key="5"/>
<feature type="chain" id="PRO_0000327980" description="AP-3 complex subunit mu">
    <location>
        <begin position="1"/>
        <end position="421"/>
    </location>
</feature>
<feature type="domain" description="MHD" evidence="2">
    <location>
        <begin position="178"/>
        <end position="420"/>
    </location>
</feature>
<accession>Q9GPF1</accession>
<accession>Q54Y74</accession>
<sequence>MLSSFFIIADQGDILIEKHWRGLMNRSICEYFWDQVLQSKQNGSSVPPIISTPKYYLINIQKQNVYLLGVCQSEVSPLLVVDFLQRIYDTFVEYFGSNITSATIKENFVHVYQLLDEMADNGFPFTTELNFLKEMIKPPGVLSNVISSVTGTSNITDILPNGSLGAIQWRKTGIKYTQNKIFFDIIEEIDCIIDSNGYIVSSEINGEILCHCNLSGMPDLTMTFNNPRMLDDVSFHPCVRYSRWENDRVLSFIPPDGNFKLLSYRVKGINQFPVYVKPQISYSEGSSSVGRVNVTVGAKGYNVQNKLSIEDVVATIPFSKTTSSTNLTANIGSFGMDEQSKILRWNIGKIPKEKTPFLNGTVSLIAGSMTPESTPSIMLQFKIPQYAISGLTIDSLACSERYKPFKGVKCTTKAGKFQVRS</sequence>
<dbReference type="EMBL" id="AY007279">
    <property type="protein sequence ID" value="AAG11392.1"/>
    <property type="molecule type" value="mRNA"/>
</dbReference>
<dbReference type="EMBL" id="AAFI02000023">
    <property type="protein sequence ID" value="EAL68123.1"/>
    <property type="molecule type" value="Genomic_DNA"/>
</dbReference>
<dbReference type="RefSeq" id="XP_642328.1">
    <property type="nucleotide sequence ID" value="XM_637236.2"/>
</dbReference>
<dbReference type="SMR" id="Q9GPF1"/>
<dbReference type="FunCoup" id="Q9GPF1">
    <property type="interactions" value="489"/>
</dbReference>
<dbReference type="STRING" id="44689.Q9GPF1"/>
<dbReference type="GlyGen" id="Q9GPF1">
    <property type="glycosylation" value="2 sites"/>
</dbReference>
<dbReference type="PaxDb" id="44689-DDB0214930"/>
<dbReference type="EnsemblProtists" id="EAL68123">
    <property type="protein sequence ID" value="EAL68123"/>
    <property type="gene ID" value="DDB_G0277901"/>
</dbReference>
<dbReference type="GeneID" id="8621534"/>
<dbReference type="KEGG" id="ddi:DDB_G0277901"/>
<dbReference type="dictyBase" id="DDB_G0277901">
    <property type="gene designation" value="apm3"/>
</dbReference>
<dbReference type="VEuPathDB" id="AmoebaDB:DDB_G0277901"/>
<dbReference type="eggNOG" id="KOG2740">
    <property type="taxonomic scope" value="Eukaryota"/>
</dbReference>
<dbReference type="HOGENOM" id="CLU_026996_6_2_1"/>
<dbReference type="InParanoid" id="Q9GPF1"/>
<dbReference type="OMA" id="INVHFTI"/>
<dbReference type="PhylomeDB" id="Q9GPF1"/>
<dbReference type="PRO" id="PR:Q9GPF1"/>
<dbReference type="Proteomes" id="UP000002195">
    <property type="component" value="Chromosome 3"/>
</dbReference>
<dbReference type="GO" id="GO:0030123">
    <property type="term" value="C:AP-3 adaptor complex"/>
    <property type="evidence" value="ECO:0000314"/>
    <property type="project" value="dictyBase"/>
</dbReference>
<dbReference type="GO" id="GO:0030131">
    <property type="term" value="C:clathrin adaptor complex"/>
    <property type="evidence" value="ECO:0007669"/>
    <property type="project" value="InterPro"/>
</dbReference>
<dbReference type="GO" id="GO:0031410">
    <property type="term" value="C:cytoplasmic vesicle"/>
    <property type="evidence" value="ECO:0000318"/>
    <property type="project" value="GO_Central"/>
</dbReference>
<dbReference type="GO" id="GO:0010008">
    <property type="term" value="C:endosome membrane"/>
    <property type="evidence" value="ECO:0007669"/>
    <property type="project" value="UniProtKB-SubCell"/>
</dbReference>
<dbReference type="GO" id="GO:0031201">
    <property type="term" value="C:SNARE complex"/>
    <property type="evidence" value="ECO:0000314"/>
    <property type="project" value="dictyBase"/>
</dbReference>
<dbReference type="GO" id="GO:0009267">
    <property type="term" value="P:cellular response to starvation"/>
    <property type="evidence" value="ECO:0000315"/>
    <property type="project" value="dictyBase"/>
</dbReference>
<dbReference type="GO" id="GO:0006897">
    <property type="term" value="P:endocytosis"/>
    <property type="evidence" value="ECO:0000318"/>
    <property type="project" value="GO_Central"/>
</dbReference>
<dbReference type="GO" id="GO:0007032">
    <property type="term" value="P:endosome organization"/>
    <property type="evidence" value="ECO:0000315"/>
    <property type="project" value="dictyBase"/>
</dbReference>
<dbReference type="GO" id="GO:0008333">
    <property type="term" value="P:endosome to lysosome transport"/>
    <property type="evidence" value="ECO:0000315"/>
    <property type="project" value="dictyBase"/>
</dbReference>
<dbReference type="GO" id="GO:0006886">
    <property type="term" value="P:intracellular protein transport"/>
    <property type="evidence" value="ECO:0007669"/>
    <property type="project" value="InterPro"/>
</dbReference>
<dbReference type="GO" id="GO:0007040">
    <property type="term" value="P:lysosome organization"/>
    <property type="evidence" value="ECO:0000315"/>
    <property type="project" value="dictyBase"/>
</dbReference>
<dbReference type="GO" id="GO:0006907">
    <property type="term" value="P:pinocytosis"/>
    <property type="evidence" value="ECO:0000315"/>
    <property type="project" value="dictyBase"/>
</dbReference>
<dbReference type="GO" id="GO:0071692">
    <property type="term" value="P:protein localization to extracellular region"/>
    <property type="evidence" value="ECO:0000315"/>
    <property type="project" value="dictyBase"/>
</dbReference>
<dbReference type="GO" id="GO:0009306">
    <property type="term" value="P:protein secretion"/>
    <property type="evidence" value="ECO:0000314"/>
    <property type="project" value="dictyBase"/>
</dbReference>
<dbReference type="CDD" id="cd09252">
    <property type="entry name" value="AP-3_Mu3_Cterm"/>
    <property type="match status" value="1"/>
</dbReference>
<dbReference type="CDD" id="cd14837">
    <property type="entry name" value="AP3_Mu_N"/>
    <property type="match status" value="1"/>
</dbReference>
<dbReference type="FunFam" id="3.30.450.60:FF:000002">
    <property type="entry name" value="AP-2 complex subunit mu, putative"/>
    <property type="match status" value="1"/>
</dbReference>
<dbReference type="Gene3D" id="3.30.450.60">
    <property type="match status" value="1"/>
</dbReference>
<dbReference type="Gene3D" id="2.60.40.1170">
    <property type="entry name" value="Mu homology domain, subdomain B"/>
    <property type="match status" value="2"/>
</dbReference>
<dbReference type="InterPro" id="IPR050431">
    <property type="entry name" value="Adaptor_comp_med_subunit"/>
</dbReference>
<dbReference type="InterPro" id="IPR036168">
    <property type="entry name" value="AP2_Mu_C_sf"/>
</dbReference>
<dbReference type="InterPro" id="IPR001392">
    <property type="entry name" value="Clathrin_mu"/>
</dbReference>
<dbReference type="InterPro" id="IPR018240">
    <property type="entry name" value="Clathrin_mu_CS"/>
</dbReference>
<dbReference type="InterPro" id="IPR011012">
    <property type="entry name" value="Longin-like_dom_sf"/>
</dbReference>
<dbReference type="InterPro" id="IPR028565">
    <property type="entry name" value="MHD"/>
</dbReference>
<dbReference type="PANTHER" id="PTHR10529">
    <property type="entry name" value="AP COMPLEX SUBUNIT MU"/>
    <property type="match status" value="1"/>
</dbReference>
<dbReference type="Pfam" id="PF00928">
    <property type="entry name" value="Adap_comp_sub"/>
    <property type="match status" value="1"/>
</dbReference>
<dbReference type="PIRSF" id="PIRSF005992">
    <property type="entry name" value="Clathrin_mu"/>
    <property type="match status" value="1"/>
</dbReference>
<dbReference type="PRINTS" id="PR00314">
    <property type="entry name" value="CLATHRINADPT"/>
</dbReference>
<dbReference type="SUPFAM" id="SSF49447">
    <property type="entry name" value="Second domain of Mu2 adaptin subunit (ap50) of ap2 adaptor"/>
    <property type="match status" value="1"/>
</dbReference>
<dbReference type="SUPFAM" id="SSF64356">
    <property type="entry name" value="SNARE-like"/>
    <property type="match status" value="1"/>
</dbReference>
<dbReference type="PROSITE" id="PS00991">
    <property type="entry name" value="CLAT_ADAPTOR_M_2"/>
    <property type="match status" value="1"/>
</dbReference>
<dbReference type="PROSITE" id="PS51072">
    <property type="entry name" value="MHD"/>
    <property type="match status" value="1"/>
</dbReference>
<keyword id="KW-0967">Endosome</keyword>
<keyword id="KW-0472">Membrane</keyword>
<keyword id="KW-0653">Protein transport</keyword>
<keyword id="KW-1185">Reference proteome</keyword>
<keyword id="KW-0813">Transport</keyword>
<gene>
    <name type="primary">apm3</name>
    <name type="ORF">DDB_G0277901</name>
</gene>
<reference key="1">
    <citation type="journal article" date="2001" name="Gene">
        <title>Identification of clathrin-adaptor medium chains in Dictyostelium discoideum: differential expression during development.</title>
        <authorList>
            <person name="de Chassey B."/>
            <person name="Dubois A."/>
            <person name="Lefkir Y."/>
            <person name="Letourneur F."/>
        </authorList>
    </citation>
    <scope>NUCLEOTIDE SEQUENCE [MRNA]</scope>
    <scope>DEVELOPMENTAL STAGE</scope>
</reference>
<reference key="2">
    <citation type="journal article" date="2005" name="Nature">
        <title>The genome of the social amoeba Dictyostelium discoideum.</title>
        <authorList>
            <person name="Eichinger L."/>
            <person name="Pachebat J.A."/>
            <person name="Gloeckner G."/>
            <person name="Rajandream M.A."/>
            <person name="Sucgang R."/>
            <person name="Berriman M."/>
            <person name="Song J."/>
            <person name="Olsen R."/>
            <person name="Szafranski K."/>
            <person name="Xu Q."/>
            <person name="Tunggal B."/>
            <person name="Kummerfeld S."/>
            <person name="Madera M."/>
            <person name="Konfortov B.A."/>
            <person name="Rivero F."/>
            <person name="Bankier A.T."/>
            <person name="Lehmann R."/>
            <person name="Hamlin N."/>
            <person name="Davies R."/>
            <person name="Gaudet P."/>
            <person name="Fey P."/>
            <person name="Pilcher K."/>
            <person name="Chen G."/>
            <person name="Saunders D."/>
            <person name="Sodergren E.J."/>
            <person name="Davis P."/>
            <person name="Kerhornou A."/>
            <person name="Nie X."/>
            <person name="Hall N."/>
            <person name="Anjard C."/>
            <person name="Hemphill L."/>
            <person name="Bason N."/>
            <person name="Farbrother P."/>
            <person name="Desany B."/>
            <person name="Just E."/>
            <person name="Morio T."/>
            <person name="Rost R."/>
            <person name="Churcher C.M."/>
            <person name="Cooper J."/>
            <person name="Haydock S."/>
            <person name="van Driessche N."/>
            <person name="Cronin A."/>
            <person name="Goodhead I."/>
            <person name="Muzny D.M."/>
            <person name="Mourier T."/>
            <person name="Pain A."/>
            <person name="Lu M."/>
            <person name="Harper D."/>
            <person name="Lindsay R."/>
            <person name="Hauser H."/>
            <person name="James K.D."/>
            <person name="Quiles M."/>
            <person name="Madan Babu M."/>
            <person name="Saito T."/>
            <person name="Buchrieser C."/>
            <person name="Wardroper A."/>
            <person name="Felder M."/>
            <person name="Thangavelu M."/>
            <person name="Johnson D."/>
            <person name="Knights A."/>
            <person name="Loulseged H."/>
            <person name="Mungall K.L."/>
            <person name="Oliver K."/>
            <person name="Price C."/>
            <person name="Quail M.A."/>
            <person name="Urushihara H."/>
            <person name="Hernandez J."/>
            <person name="Rabbinowitsch E."/>
            <person name="Steffen D."/>
            <person name="Sanders M."/>
            <person name="Ma J."/>
            <person name="Kohara Y."/>
            <person name="Sharp S."/>
            <person name="Simmonds M.N."/>
            <person name="Spiegler S."/>
            <person name="Tivey A."/>
            <person name="Sugano S."/>
            <person name="White B."/>
            <person name="Walker D."/>
            <person name="Woodward J.R."/>
            <person name="Winckler T."/>
            <person name="Tanaka Y."/>
            <person name="Shaulsky G."/>
            <person name="Schleicher M."/>
            <person name="Weinstock G.M."/>
            <person name="Rosenthal A."/>
            <person name="Cox E.C."/>
            <person name="Chisholm R.L."/>
            <person name="Gibbs R.A."/>
            <person name="Loomis W.F."/>
            <person name="Platzer M."/>
            <person name="Kay R.R."/>
            <person name="Williams J.G."/>
            <person name="Dear P.H."/>
            <person name="Noegel A.A."/>
            <person name="Barrell B.G."/>
            <person name="Kuspa A."/>
        </authorList>
    </citation>
    <scope>NUCLEOTIDE SEQUENCE [LARGE SCALE GENOMIC DNA]</scope>
    <source>
        <strain>AX4</strain>
    </source>
</reference>
<reference key="3">
    <citation type="journal article" date="2006" name="Traffic">
        <title>A role for adaptor protein-3 complex in the organization of the endocytic pathway in Dictyostelium.</title>
        <authorList>
            <person name="Charette S.J."/>
            <person name="Mercanti V."/>
            <person name="Letourneur F."/>
            <person name="Bennett N."/>
            <person name="Cosson P."/>
        </authorList>
    </citation>
    <scope>FUNCTION</scope>
    <scope>DISRUPTION PHENOTYPE</scope>
</reference>
<protein>
    <recommendedName>
        <fullName>AP-3 complex subunit mu</fullName>
    </recommendedName>
    <alternativeName>
        <fullName>AP-3 adaptor complex mu3 subunit</fullName>
    </alternativeName>
    <alternativeName>
        <fullName>Adaptor-related protein complex 3 subunit mu</fullName>
    </alternativeName>
    <alternativeName>
        <fullName>Clathrin-adaptor medium chain Apm3</fullName>
    </alternativeName>
    <alternativeName>
        <fullName>Mu3-adaptin</fullName>
    </alternativeName>
</protein>
<proteinExistence type="evidence at transcript level"/>
<organism>
    <name type="scientific">Dictyostelium discoideum</name>
    <name type="common">Social amoeba</name>
    <dbReference type="NCBI Taxonomy" id="44689"/>
    <lineage>
        <taxon>Eukaryota</taxon>
        <taxon>Amoebozoa</taxon>
        <taxon>Evosea</taxon>
        <taxon>Eumycetozoa</taxon>
        <taxon>Dictyostelia</taxon>
        <taxon>Dictyosteliales</taxon>
        <taxon>Dictyosteliaceae</taxon>
        <taxon>Dictyostelium</taxon>
    </lineage>
</organism>
<name>AP3M_DICDI</name>